<keyword id="KW-0963">Cytoplasm</keyword>
<keyword id="KW-0275">Fatty acid biosynthesis</keyword>
<keyword id="KW-0276">Fatty acid metabolism</keyword>
<keyword id="KW-0444">Lipid biosynthesis</keyword>
<keyword id="KW-0443">Lipid metabolism</keyword>
<keyword id="KW-0460">Magnesium</keyword>
<keyword id="KW-0479">Metal-binding</keyword>
<keyword id="KW-0808">Transferase</keyword>
<dbReference type="EC" id="2.7.8.7" evidence="1"/>
<dbReference type="EMBL" id="FM211192">
    <property type="protein sequence ID" value="CAR71287.1"/>
    <property type="molecule type" value="Genomic_DNA"/>
</dbReference>
<dbReference type="SMR" id="B8ZR72"/>
<dbReference type="KEGG" id="mlb:MLBr01192"/>
<dbReference type="HOGENOM" id="CLU_089696_2_0_11"/>
<dbReference type="Proteomes" id="UP000006900">
    <property type="component" value="Chromosome"/>
</dbReference>
<dbReference type="GO" id="GO:0005737">
    <property type="term" value="C:cytoplasm"/>
    <property type="evidence" value="ECO:0007669"/>
    <property type="project" value="UniProtKB-SubCell"/>
</dbReference>
<dbReference type="GO" id="GO:0008897">
    <property type="term" value="F:holo-[acyl-carrier-protein] synthase activity"/>
    <property type="evidence" value="ECO:0007669"/>
    <property type="project" value="UniProtKB-UniRule"/>
</dbReference>
<dbReference type="GO" id="GO:0000287">
    <property type="term" value="F:magnesium ion binding"/>
    <property type="evidence" value="ECO:0007669"/>
    <property type="project" value="UniProtKB-UniRule"/>
</dbReference>
<dbReference type="GO" id="GO:0006633">
    <property type="term" value="P:fatty acid biosynthetic process"/>
    <property type="evidence" value="ECO:0007669"/>
    <property type="project" value="UniProtKB-UniRule"/>
</dbReference>
<dbReference type="Gene3D" id="3.90.470.20">
    <property type="entry name" value="4'-phosphopantetheinyl transferase domain"/>
    <property type="match status" value="1"/>
</dbReference>
<dbReference type="HAMAP" id="MF_00101">
    <property type="entry name" value="AcpS"/>
    <property type="match status" value="1"/>
</dbReference>
<dbReference type="InterPro" id="IPR008278">
    <property type="entry name" value="4-PPantetheinyl_Trfase_dom"/>
</dbReference>
<dbReference type="InterPro" id="IPR037143">
    <property type="entry name" value="4-PPantetheinyl_Trfase_dom_sf"/>
</dbReference>
<dbReference type="InterPro" id="IPR002582">
    <property type="entry name" value="ACPS"/>
</dbReference>
<dbReference type="InterPro" id="IPR004568">
    <property type="entry name" value="Ppantetheine-prot_Trfase_dom"/>
</dbReference>
<dbReference type="NCBIfam" id="TIGR00556">
    <property type="entry name" value="pantethn_trn"/>
    <property type="match status" value="1"/>
</dbReference>
<dbReference type="NCBIfam" id="NF000831">
    <property type="entry name" value="PRK00070.3-1"/>
    <property type="match status" value="1"/>
</dbReference>
<dbReference type="Pfam" id="PF01648">
    <property type="entry name" value="ACPS"/>
    <property type="match status" value="1"/>
</dbReference>
<dbReference type="SUPFAM" id="SSF56214">
    <property type="entry name" value="4'-phosphopantetheinyl transferase"/>
    <property type="match status" value="1"/>
</dbReference>
<gene>
    <name evidence="1" type="primary">acpS</name>
    <name type="ordered locus">MLBr01192</name>
</gene>
<organism>
    <name type="scientific">Mycobacterium leprae (strain Br4923)</name>
    <dbReference type="NCBI Taxonomy" id="561304"/>
    <lineage>
        <taxon>Bacteria</taxon>
        <taxon>Bacillati</taxon>
        <taxon>Actinomycetota</taxon>
        <taxon>Actinomycetes</taxon>
        <taxon>Mycobacteriales</taxon>
        <taxon>Mycobacteriaceae</taxon>
        <taxon>Mycobacterium</taxon>
    </lineage>
</organism>
<accession>B8ZR72</accession>
<protein>
    <recommendedName>
        <fullName evidence="1">Holo-[acyl-carrier-protein] synthase</fullName>
        <shortName evidence="1">Holo-ACP synthase</shortName>
        <ecNumber evidence="1">2.7.8.7</ecNumber>
    </recommendedName>
    <alternativeName>
        <fullName evidence="1">4'-phosphopantetheinyl transferase AcpS</fullName>
    </alternativeName>
</protein>
<reference key="1">
    <citation type="journal article" date="2009" name="Nat. Genet.">
        <title>Comparative genomic and phylogeographic analysis of Mycobacterium leprae.</title>
        <authorList>
            <person name="Monot M."/>
            <person name="Honore N."/>
            <person name="Garnier T."/>
            <person name="Zidane N."/>
            <person name="Sherafi D."/>
            <person name="Paniz-Mondolfi A."/>
            <person name="Matsuoka M."/>
            <person name="Taylor G.M."/>
            <person name="Donoghue H.D."/>
            <person name="Bouwman A."/>
            <person name="Mays S."/>
            <person name="Watson C."/>
            <person name="Lockwood D."/>
            <person name="Khamispour A."/>
            <person name="Dowlati Y."/>
            <person name="Jianping S."/>
            <person name="Rea T.H."/>
            <person name="Vera-Cabrera L."/>
            <person name="Stefani M.M."/>
            <person name="Banu S."/>
            <person name="Macdonald M."/>
            <person name="Sapkota B.R."/>
            <person name="Spencer J.S."/>
            <person name="Thomas J."/>
            <person name="Harshman K."/>
            <person name="Singh P."/>
            <person name="Busso P."/>
            <person name="Gattiker A."/>
            <person name="Rougemont J."/>
            <person name="Brennan P.J."/>
            <person name="Cole S.T."/>
        </authorList>
    </citation>
    <scope>NUCLEOTIDE SEQUENCE [LARGE SCALE GENOMIC DNA]</scope>
    <source>
        <strain>Br4923</strain>
    </source>
</reference>
<feature type="chain" id="PRO_1000118819" description="Holo-[acyl-carrier-protein] synthase">
    <location>
        <begin position="1"/>
        <end position="130"/>
    </location>
</feature>
<feature type="binding site" evidence="1">
    <location>
        <position position="9"/>
    </location>
    <ligand>
        <name>Mg(2+)</name>
        <dbReference type="ChEBI" id="CHEBI:18420"/>
    </ligand>
</feature>
<feature type="binding site" evidence="1">
    <location>
        <position position="58"/>
    </location>
    <ligand>
        <name>Mg(2+)</name>
        <dbReference type="ChEBI" id="CHEBI:18420"/>
    </ligand>
</feature>
<sequence length="130" mass="14137">MGIVGVGIDLVSIPDFAEQVSQPGTVFMTIFTPGERRDASVKSSSAVCHLAARWAVKEAVIKAWSGSRFAQRPMLPENIHRDIEVVNDMWGRPRVRLTGAIAKHLTDVTIHVSLTHEGDIAAAVVILEVL</sequence>
<comment type="function">
    <text evidence="1">Transfers the 4'-phosphopantetheine moiety from coenzyme A to a Ser of acyl-carrier-protein.</text>
</comment>
<comment type="catalytic activity">
    <reaction evidence="1">
        <text>apo-[ACP] + CoA = holo-[ACP] + adenosine 3',5'-bisphosphate + H(+)</text>
        <dbReference type="Rhea" id="RHEA:12068"/>
        <dbReference type="Rhea" id="RHEA-COMP:9685"/>
        <dbReference type="Rhea" id="RHEA-COMP:9690"/>
        <dbReference type="ChEBI" id="CHEBI:15378"/>
        <dbReference type="ChEBI" id="CHEBI:29999"/>
        <dbReference type="ChEBI" id="CHEBI:57287"/>
        <dbReference type="ChEBI" id="CHEBI:58343"/>
        <dbReference type="ChEBI" id="CHEBI:64479"/>
        <dbReference type="EC" id="2.7.8.7"/>
    </reaction>
</comment>
<comment type="cofactor">
    <cofactor evidence="1">
        <name>Mg(2+)</name>
        <dbReference type="ChEBI" id="CHEBI:18420"/>
    </cofactor>
</comment>
<comment type="subcellular location">
    <subcellularLocation>
        <location evidence="1">Cytoplasm</location>
    </subcellularLocation>
</comment>
<comment type="similarity">
    <text evidence="1">Belongs to the P-Pant transferase superfamily. AcpS family.</text>
</comment>
<name>ACPS_MYCLB</name>
<proteinExistence type="inferred from homology"/>
<evidence type="ECO:0000255" key="1">
    <source>
        <dbReference type="HAMAP-Rule" id="MF_00101"/>
    </source>
</evidence>